<sequence length="85" mass="9909">MASLLSPIIKLLSYVIRCYQLIISPLIKPHCRFLPTCSQYSITAIHRFGIFKGIWLTLIRILRCNPWSQGGEDQVPLNIFDKREY</sequence>
<comment type="function">
    <text evidence="1">Could be involved in insertion of integral membrane proteins into the membrane.</text>
</comment>
<comment type="subcellular location">
    <subcellularLocation>
        <location evidence="1">Cell membrane</location>
        <topology evidence="1">Peripheral membrane protein</topology>
        <orientation evidence="1">Cytoplasmic side</orientation>
    </subcellularLocation>
</comment>
<comment type="similarity">
    <text evidence="1">Belongs to the UPF0161 family.</text>
</comment>
<evidence type="ECO:0000255" key="1">
    <source>
        <dbReference type="HAMAP-Rule" id="MF_00386"/>
    </source>
</evidence>
<gene>
    <name type="ordered locus">BCI_0135</name>
</gene>
<protein>
    <recommendedName>
        <fullName evidence="1">Putative membrane protein insertion efficiency factor</fullName>
    </recommendedName>
</protein>
<proteinExistence type="inferred from homology"/>
<keyword id="KW-1003">Cell membrane</keyword>
<keyword id="KW-0472">Membrane</keyword>
<keyword id="KW-1185">Reference proteome</keyword>
<reference key="1">
    <citation type="journal article" date="2006" name="PLoS Biol.">
        <title>Metabolic complementarity and genomics of the dual bacterial symbiosis of sharpshooters.</title>
        <authorList>
            <person name="Wu D."/>
            <person name="Daugherty S.C."/>
            <person name="Van Aken S.E."/>
            <person name="Pai G.H."/>
            <person name="Watkins K.L."/>
            <person name="Khouri H."/>
            <person name="Tallon L.J."/>
            <person name="Zaborsky J.M."/>
            <person name="Dunbar H.E."/>
            <person name="Tran P.L."/>
            <person name="Moran N.A."/>
            <person name="Eisen J.A."/>
        </authorList>
    </citation>
    <scope>NUCLEOTIDE SEQUENCE [LARGE SCALE GENOMIC DNA]</scope>
</reference>
<feature type="chain" id="PRO_0000253082" description="Putative membrane protein insertion efficiency factor">
    <location>
        <begin position="1"/>
        <end position="85"/>
    </location>
</feature>
<organism>
    <name type="scientific">Baumannia cicadellinicola subsp. Homalodisca coagulata</name>
    <dbReference type="NCBI Taxonomy" id="374463"/>
    <lineage>
        <taxon>Bacteria</taxon>
        <taxon>Pseudomonadati</taxon>
        <taxon>Pseudomonadota</taxon>
        <taxon>Gammaproteobacteria</taxon>
        <taxon>Candidatus Palibaumannia</taxon>
    </lineage>
</organism>
<accession>Q1LTW0</accession>
<name>YIDD_BAUCH</name>
<dbReference type="EMBL" id="CP000238">
    <property type="protein sequence ID" value="ABF14026.1"/>
    <property type="molecule type" value="Genomic_DNA"/>
</dbReference>
<dbReference type="RefSeq" id="WP_011520337.1">
    <property type="nucleotide sequence ID" value="NC_007984.1"/>
</dbReference>
<dbReference type="STRING" id="374463.BCI_0135"/>
<dbReference type="KEGG" id="bci:BCI_0135"/>
<dbReference type="HOGENOM" id="CLU_144811_5_2_6"/>
<dbReference type="OrthoDB" id="9801753at2"/>
<dbReference type="Proteomes" id="UP000002427">
    <property type="component" value="Chromosome"/>
</dbReference>
<dbReference type="GO" id="GO:0005886">
    <property type="term" value="C:plasma membrane"/>
    <property type="evidence" value="ECO:0007669"/>
    <property type="project" value="UniProtKB-SubCell"/>
</dbReference>
<dbReference type="HAMAP" id="MF_00386">
    <property type="entry name" value="UPF0161_YidD"/>
    <property type="match status" value="1"/>
</dbReference>
<dbReference type="InterPro" id="IPR002696">
    <property type="entry name" value="Membr_insert_effic_factor_YidD"/>
</dbReference>
<dbReference type="NCBIfam" id="TIGR00278">
    <property type="entry name" value="membrane protein insertion efficiency factor YidD"/>
    <property type="match status" value="1"/>
</dbReference>
<dbReference type="PANTHER" id="PTHR33383">
    <property type="entry name" value="MEMBRANE PROTEIN INSERTION EFFICIENCY FACTOR-RELATED"/>
    <property type="match status" value="1"/>
</dbReference>
<dbReference type="PANTHER" id="PTHR33383:SF1">
    <property type="entry name" value="MEMBRANE PROTEIN INSERTION EFFICIENCY FACTOR-RELATED"/>
    <property type="match status" value="1"/>
</dbReference>
<dbReference type="Pfam" id="PF01809">
    <property type="entry name" value="YidD"/>
    <property type="match status" value="1"/>
</dbReference>
<dbReference type="SMART" id="SM01234">
    <property type="entry name" value="Haemolytic"/>
    <property type="match status" value="1"/>
</dbReference>